<accession>P43157</accession>
<reference key="1">
    <citation type="journal article" date="1994" name="Trop. Med. Parasitol.">
        <title>cDNA sequences of Schistosoma japonicum coding for two cathepsin B-like proteins and Sj32.</title>
        <authorList>
            <person name="Merckelbach A."/>
            <person name="Hasse S."/>
            <person name="Dell R."/>
            <person name="Eschlbeck A."/>
            <person name="Ruppel A."/>
        </authorList>
    </citation>
    <scope>NUCLEOTIDE SEQUENCE [MRNA]</scope>
    <source>
        <strain>Chinese</strain>
    </source>
</reference>
<organism>
    <name type="scientific">Schistosoma japonicum</name>
    <name type="common">Blood fluke</name>
    <dbReference type="NCBI Taxonomy" id="6182"/>
    <lineage>
        <taxon>Eukaryota</taxon>
        <taxon>Metazoa</taxon>
        <taxon>Spiralia</taxon>
        <taxon>Lophotrochozoa</taxon>
        <taxon>Platyhelminthes</taxon>
        <taxon>Trematoda</taxon>
        <taxon>Digenea</taxon>
        <taxon>Strigeidida</taxon>
        <taxon>Schistosomatoidea</taxon>
        <taxon>Schistosomatidae</taxon>
        <taxon>Schistosoma</taxon>
    </lineage>
</organism>
<proteinExistence type="evidence at transcript level"/>
<feature type="signal peptide" evidence="2">
    <location>
        <begin position="1"/>
        <end position="17"/>
    </location>
</feature>
<feature type="propeptide" id="PRO_0000026170" description="Activation peptide" evidence="2">
    <location>
        <begin position="18"/>
        <end position="89"/>
    </location>
</feature>
<feature type="chain" id="PRO_0000026171" description="Cathepsin B-like cysteine proteinase">
    <location>
        <begin position="90"/>
        <end position="342"/>
    </location>
</feature>
<feature type="active site" evidence="1">
    <location>
        <position position="118"/>
    </location>
</feature>
<feature type="active site" evidence="1">
    <location>
        <position position="288"/>
    </location>
</feature>
<feature type="active site" evidence="1">
    <location>
        <position position="308"/>
    </location>
</feature>
<feature type="disulfide bond" evidence="1">
    <location>
        <begin position="103"/>
        <end position="132"/>
    </location>
</feature>
<feature type="disulfide bond" evidence="1">
    <location>
        <begin position="115"/>
        <end position="159"/>
    </location>
</feature>
<feature type="disulfide bond" evidence="1">
    <location>
        <begin position="151"/>
        <end position="217"/>
    </location>
</feature>
<feature type="disulfide bond" evidence="1">
    <location>
        <begin position="152"/>
        <end position="155"/>
    </location>
</feature>
<feature type="disulfide bond" evidence="1">
    <location>
        <begin position="188"/>
        <end position="221"/>
    </location>
</feature>
<feature type="disulfide bond" evidence="1">
    <location>
        <begin position="196"/>
        <end position="207"/>
    </location>
</feature>
<comment type="function">
    <text>Thiol protease. Has a role as a digestive enzyme.</text>
</comment>
<comment type="tissue specificity">
    <text>Intestine (gut).</text>
</comment>
<comment type="similarity">
    <text evidence="3 4 5">Belongs to the peptidase C1 family.</text>
</comment>
<keyword id="KW-1015">Disulfide bond</keyword>
<keyword id="KW-0378">Hydrolase</keyword>
<keyword id="KW-0645">Protease</keyword>
<keyword id="KW-0732">Signal</keyword>
<keyword id="KW-0788">Thiol protease</keyword>
<keyword id="KW-0865">Zymogen</keyword>
<dbReference type="EC" id="3.4.22.-"/>
<dbReference type="EMBL" id="X70968">
    <property type="protein sequence ID" value="CAA50305.1"/>
    <property type="molecule type" value="mRNA"/>
</dbReference>
<dbReference type="PIR" id="S31907">
    <property type="entry name" value="S31907"/>
</dbReference>
<dbReference type="SMR" id="P43157"/>
<dbReference type="MEROPS" id="C01.062"/>
<dbReference type="GO" id="GO:0004197">
    <property type="term" value="F:cysteine-type endopeptidase activity"/>
    <property type="evidence" value="ECO:0007669"/>
    <property type="project" value="InterPro"/>
</dbReference>
<dbReference type="GO" id="GO:0006508">
    <property type="term" value="P:proteolysis"/>
    <property type="evidence" value="ECO:0007669"/>
    <property type="project" value="UniProtKB-KW"/>
</dbReference>
<dbReference type="CDD" id="cd02620">
    <property type="entry name" value="Peptidase_C1A_CathepsinB"/>
    <property type="match status" value="1"/>
</dbReference>
<dbReference type="FunFam" id="3.90.70.10:FF:000031">
    <property type="entry name" value="Cathepsin B"/>
    <property type="match status" value="1"/>
</dbReference>
<dbReference type="Gene3D" id="3.90.70.10">
    <property type="entry name" value="Cysteine proteinases"/>
    <property type="match status" value="1"/>
</dbReference>
<dbReference type="InterPro" id="IPR038765">
    <property type="entry name" value="Papain-like_cys_pep_sf"/>
</dbReference>
<dbReference type="InterPro" id="IPR025661">
    <property type="entry name" value="Pept_asp_AS"/>
</dbReference>
<dbReference type="InterPro" id="IPR000169">
    <property type="entry name" value="Pept_cys_AS"/>
</dbReference>
<dbReference type="InterPro" id="IPR025660">
    <property type="entry name" value="Pept_his_AS"/>
</dbReference>
<dbReference type="InterPro" id="IPR013128">
    <property type="entry name" value="Peptidase_C1A"/>
</dbReference>
<dbReference type="InterPro" id="IPR000668">
    <property type="entry name" value="Peptidase_C1A_C"/>
</dbReference>
<dbReference type="InterPro" id="IPR012599">
    <property type="entry name" value="Propeptide_C1A"/>
</dbReference>
<dbReference type="PANTHER" id="PTHR12411">
    <property type="entry name" value="CYSTEINE PROTEASE FAMILY C1-RELATED"/>
    <property type="match status" value="1"/>
</dbReference>
<dbReference type="Pfam" id="PF00112">
    <property type="entry name" value="Peptidase_C1"/>
    <property type="match status" value="1"/>
</dbReference>
<dbReference type="Pfam" id="PF08127">
    <property type="entry name" value="Propeptide_C1"/>
    <property type="match status" value="1"/>
</dbReference>
<dbReference type="PRINTS" id="PR00705">
    <property type="entry name" value="PAPAIN"/>
</dbReference>
<dbReference type="SMART" id="SM00645">
    <property type="entry name" value="Pept_C1"/>
    <property type="match status" value="1"/>
</dbReference>
<dbReference type="SUPFAM" id="SSF54001">
    <property type="entry name" value="Cysteine proteinases"/>
    <property type="match status" value="1"/>
</dbReference>
<dbReference type="PROSITE" id="PS00640">
    <property type="entry name" value="THIOL_PROTEASE_ASN"/>
    <property type="match status" value="1"/>
</dbReference>
<dbReference type="PROSITE" id="PS00139">
    <property type="entry name" value="THIOL_PROTEASE_CYS"/>
    <property type="match status" value="1"/>
</dbReference>
<dbReference type="PROSITE" id="PS00639">
    <property type="entry name" value="THIOL_PROTEASE_HIS"/>
    <property type="match status" value="1"/>
</dbReference>
<protein>
    <recommendedName>
        <fullName>Cathepsin B-like cysteine proteinase</fullName>
        <ecNumber>3.4.22.-</ecNumber>
    </recommendedName>
    <alternativeName>
        <fullName>Antigen Sj31</fullName>
    </alternativeName>
</protein>
<sequence>MLKIAVYIVSLFTFLEAHVTTRNNQRIEPLSDEMISFINEHPDAGWKADKSDRFHSLDDARILMGARKEDAEMKRNRRPTVDHHDLNVEIPSQFDSRKKWPHCKSISQIRDQSRCGSCWAFGAVEAMTDRICIQSGGGQSAELSALDLISCCKDCGDGCQGGFPGVAWDYWVKRGIVTGGSKENHTGCQPYPFPKCEHHTKGKYPACGTKIYKTPQCKQTCQKGYKTPYEQDKHYGDESYNVQNNEKVIQRDIMMYGPVEAAFDVYEDFLNYKSGIYRHVTGSIVGGHAIRIIGWGVEKRTPYWLIANSWNEDWGEKGLFRMVRGRDECSIESDVVAGLIKT</sequence>
<name>CYSP_SCHJA</name>
<gene>
    <name type="primary">CATB</name>
</gene>
<evidence type="ECO:0000250" key="1"/>
<evidence type="ECO:0000255" key="2"/>
<evidence type="ECO:0000255" key="3">
    <source>
        <dbReference type="PROSITE-ProRule" id="PRU10088"/>
    </source>
</evidence>
<evidence type="ECO:0000255" key="4">
    <source>
        <dbReference type="PROSITE-ProRule" id="PRU10089"/>
    </source>
</evidence>
<evidence type="ECO:0000255" key="5">
    <source>
        <dbReference type="PROSITE-ProRule" id="PRU10090"/>
    </source>
</evidence>